<dbReference type="EC" id="2.6.1.9" evidence="1"/>
<dbReference type="EMBL" id="CP000127">
    <property type="protein sequence ID" value="ABA56708.1"/>
    <property type="molecule type" value="Genomic_DNA"/>
</dbReference>
<dbReference type="SMR" id="Q3JEN8"/>
<dbReference type="STRING" id="323261.Noc_0175"/>
<dbReference type="KEGG" id="noc:Noc_0175"/>
<dbReference type="eggNOG" id="COG0079">
    <property type="taxonomic scope" value="Bacteria"/>
</dbReference>
<dbReference type="HOGENOM" id="CLU_017584_3_3_6"/>
<dbReference type="InParanoid" id="Q3JEN8"/>
<dbReference type="UniPathway" id="UPA00031">
    <property type="reaction ID" value="UER00012"/>
</dbReference>
<dbReference type="Proteomes" id="UP000006838">
    <property type="component" value="Chromosome"/>
</dbReference>
<dbReference type="GO" id="GO:0004400">
    <property type="term" value="F:histidinol-phosphate transaminase activity"/>
    <property type="evidence" value="ECO:0007669"/>
    <property type="project" value="UniProtKB-UniRule"/>
</dbReference>
<dbReference type="GO" id="GO:0030170">
    <property type="term" value="F:pyridoxal phosphate binding"/>
    <property type="evidence" value="ECO:0007669"/>
    <property type="project" value="InterPro"/>
</dbReference>
<dbReference type="GO" id="GO:0000105">
    <property type="term" value="P:L-histidine biosynthetic process"/>
    <property type="evidence" value="ECO:0007669"/>
    <property type="project" value="UniProtKB-UniRule"/>
</dbReference>
<dbReference type="CDD" id="cd00609">
    <property type="entry name" value="AAT_like"/>
    <property type="match status" value="1"/>
</dbReference>
<dbReference type="Gene3D" id="3.90.1150.10">
    <property type="entry name" value="Aspartate Aminotransferase, domain 1"/>
    <property type="match status" value="1"/>
</dbReference>
<dbReference type="Gene3D" id="3.40.640.10">
    <property type="entry name" value="Type I PLP-dependent aspartate aminotransferase-like (Major domain)"/>
    <property type="match status" value="1"/>
</dbReference>
<dbReference type="HAMAP" id="MF_01023">
    <property type="entry name" value="HisC_aminotrans_2"/>
    <property type="match status" value="1"/>
</dbReference>
<dbReference type="InterPro" id="IPR004839">
    <property type="entry name" value="Aminotransferase_I/II_large"/>
</dbReference>
<dbReference type="InterPro" id="IPR005861">
    <property type="entry name" value="HisP_aminotrans"/>
</dbReference>
<dbReference type="InterPro" id="IPR050106">
    <property type="entry name" value="HistidinolP_aminotransfase"/>
</dbReference>
<dbReference type="InterPro" id="IPR015424">
    <property type="entry name" value="PyrdxlP-dep_Trfase"/>
</dbReference>
<dbReference type="InterPro" id="IPR015421">
    <property type="entry name" value="PyrdxlP-dep_Trfase_major"/>
</dbReference>
<dbReference type="InterPro" id="IPR015422">
    <property type="entry name" value="PyrdxlP-dep_Trfase_small"/>
</dbReference>
<dbReference type="NCBIfam" id="TIGR01141">
    <property type="entry name" value="hisC"/>
    <property type="match status" value="1"/>
</dbReference>
<dbReference type="PANTHER" id="PTHR43643:SF3">
    <property type="entry name" value="HISTIDINOL-PHOSPHATE AMINOTRANSFERASE"/>
    <property type="match status" value="1"/>
</dbReference>
<dbReference type="PANTHER" id="PTHR43643">
    <property type="entry name" value="HISTIDINOL-PHOSPHATE AMINOTRANSFERASE 2"/>
    <property type="match status" value="1"/>
</dbReference>
<dbReference type="Pfam" id="PF00155">
    <property type="entry name" value="Aminotran_1_2"/>
    <property type="match status" value="1"/>
</dbReference>
<dbReference type="SUPFAM" id="SSF53383">
    <property type="entry name" value="PLP-dependent transferases"/>
    <property type="match status" value="1"/>
</dbReference>
<feature type="chain" id="PRO_0000153402" description="Histidinol-phosphate aminotransferase 1">
    <location>
        <begin position="1"/>
        <end position="370"/>
    </location>
</feature>
<feature type="modified residue" description="N6-(pyridoxal phosphate)lysine" evidence="1">
    <location>
        <position position="229"/>
    </location>
</feature>
<comment type="catalytic activity">
    <reaction evidence="1">
        <text>L-histidinol phosphate + 2-oxoglutarate = 3-(imidazol-4-yl)-2-oxopropyl phosphate + L-glutamate</text>
        <dbReference type="Rhea" id="RHEA:23744"/>
        <dbReference type="ChEBI" id="CHEBI:16810"/>
        <dbReference type="ChEBI" id="CHEBI:29985"/>
        <dbReference type="ChEBI" id="CHEBI:57766"/>
        <dbReference type="ChEBI" id="CHEBI:57980"/>
        <dbReference type="EC" id="2.6.1.9"/>
    </reaction>
</comment>
<comment type="cofactor">
    <cofactor evidence="1">
        <name>pyridoxal 5'-phosphate</name>
        <dbReference type="ChEBI" id="CHEBI:597326"/>
    </cofactor>
</comment>
<comment type="pathway">
    <text evidence="1">Amino-acid biosynthesis; L-histidine biosynthesis; L-histidine from 5-phospho-alpha-D-ribose 1-diphosphate: step 7/9.</text>
</comment>
<comment type="subunit">
    <text evidence="1">Homodimer.</text>
</comment>
<comment type="similarity">
    <text evidence="1">Belongs to the class-II pyridoxal-phosphate-dependent aminotransferase family. Histidinol-phosphate aminotransferase subfamily.</text>
</comment>
<evidence type="ECO:0000255" key="1">
    <source>
        <dbReference type="HAMAP-Rule" id="MF_01023"/>
    </source>
</evidence>
<accession>Q3JEN8</accession>
<keyword id="KW-0028">Amino-acid biosynthesis</keyword>
<keyword id="KW-0032">Aminotransferase</keyword>
<keyword id="KW-0368">Histidine biosynthesis</keyword>
<keyword id="KW-0663">Pyridoxal phosphate</keyword>
<keyword id="KW-1185">Reference proteome</keyword>
<keyword id="KW-0808">Transferase</keyword>
<organism>
    <name type="scientific">Nitrosococcus oceani (strain ATCC 19707 / BCRC 17464 / JCM 30415 / NCIMB 11848 / C-107)</name>
    <dbReference type="NCBI Taxonomy" id="323261"/>
    <lineage>
        <taxon>Bacteria</taxon>
        <taxon>Pseudomonadati</taxon>
        <taxon>Pseudomonadota</taxon>
        <taxon>Gammaproteobacteria</taxon>
        <taxon>Chromatiales</taxon>
        <taxon>Chromatiaceae</taxon>
        <taxon>Nitrosococcus</taxon>
    </lineage>
</organism>
<gene>
    <name evidence="1" type="primary">hisC1</name>
    <name type="ordered locus">Noc_0175</name>
</gene>
<sequence length="370" mass="40624">MAESLFYQLAAAGVQGLTPYQPGKPIEELEREYGVRGAVKLASNENPLGPSPMAIDAIYGVLGESGRYPDGNGFALKTALSQCLGIPANQITLGNGSSDLLEFAARVLISPEHEVIYSQYCFALYPLLIQILGAKGHAVPAKGFGHDLEAMVKAVNSQTRLVYIANPNNPTGTWLHSDELEAFLAALPEHVLVVLDEAYYEYVNEAQYPYSLAWMSRYPNLMITRTFSKIYGLAGLRIGYGVSHPDLADLMNRVRPPFNVNSLALAAATAALQDHDHLQRSRKVNQAGMAQLTMAFTALGLDYIPSVANFVTVDVKQSGDKVYENLLRHGVIVRPMTGYGLPRHVRVTVGREEENARFIQVLETVLEEFR</sequence>
<protein>
    <recommendedName>
        <fullName evidence="1">Histidinol-phosphate aminotransferase 1</fullName>
        <ecNumber evidence="1">2.6.1.9</ecNumber>
    </recommendedName>
    <alternativeName>
        <fullName evidence="1">Imidazole acetol-phosphate transaminase 1</fullName>
    </alternativeName>
</protein>
<proteinExistence type="inferred from homology"/>
<reference key="1">
    <citation type="journal article" date="2006" name="Appl. Environ. Microbiol.">
        <title>Complete genome sequence of the marine, chemolithoautotrophic, ammonia-oxidizing bacterium Nitrosococcus oceani ATCC 19707.</title>
        <authorList>
            <person name="Klotz M.G."/>
            <person name="Arp D.J."/>
            <person name="Chain P.S.G."/>
            <person name="El-Sheikh A.F."/>
            <person name="Hauser L.J."/>
            <person name="Hommes N.G."/>
            <person name="Larimer F.W."/>
            <person name="Malfatti S.A."/>
            <person name="Norton J.M."/>
            <person name="Poret-Peterson A.T."/>
            <person name="Vergez L.M."/>
            <person name="Ward B.B."/>
        </authorList>
    </citation>
    <scope>NUCLEOTIDE SEQUENCE [LARGE SCALE GENOMIC DNA]</scope>
    <source>
        <strain>ATCC 19707 / BCRC 17464 / JCM 30415 / NCIMB 11848 / C-107</strain>
    </source>
</reference>
<name>HIS81_NITOC</name>